<comment type="sequence caution" evidence="2">
    <conflict type="erroneous translation">
        <sequence resource="EMBL-CDS" id="AAA25040"/>
    </conflict>
    <text>Wrong choice of frame.</text>
</comment>
<comment type="sequence caution" evidence="2">
    <conflict type="erroneous translation">
        <sequence resource="EMBL-CDS" id="AAA25041"/>
    </conflict>
    <text>Wrong choice of frame.</text>
</comment>
<comment type="sequence caution" evidence="2">
    <conflict type="erroneous initiation">
        <sequence resource="EMBL-CDS" id="AAA25042"/>
    </conflict>
</comment>
<evidence type="ECO:0000255" key="1">
    <source>
        <dbReference type="PROSITE-ProRule" id="PRU00457"/>
    </source>
</evidence>
<evidence type="ECO:0000305" key="2"/>
<dbReference type="EMBL" id="M82980">
    <property type="protein sequence ID" value="AAA25040.1"/>
    <property type="status" value="ALT_SEQ"/>
    <property type="molecule type" value="Genomic_DNA"/>
</dbReference>
<dbReference type="EMBL" id="M82980">
    <property type="protein sequence ID" value="AAA25041.1"/>
    <property type="status" value="ALT_SEQ"/>
    <property type="molecule type" value="Genomic_DNA"/>
</dbReference>
<dbReference type="EMBL" id="M82980">
    <property type="protein sequence ID" value="AAA25042.1"/>
    <property type="status" value="ALT_INIT"/>
    <property type="molecule type" value="Genomic_DNA"/>
</dbReference>
<dbReference type="EMBL" id="CP000869">
    <property type="protein sequence ID" value="ABX18396.1"/>
    <property type="molecule type" value="Genomic_DNA"/>
</dbReference>
<dbReference type="EMBL" id="AP009386">
    <property type="protein sequence ID" value="BAG45657.1"/>
    <property type="molecule type" value="Genomic_DNA"/>
</dbReference>
<dbReference type="PIR" id="S28801">
    <property type="entry name" value="S28801"/>
</dbReference>
<dbReference type="PIR" id="S28802">
    <property type="entry name" value="S28802"/>
</dbReference>
<dbReference type="PIR" id="S28803">
    <property type="entry name" value="S28803"/>
</dbReference>
<dbReference type="SMR" id="P24577"/>
<dbReference type="STRING" id="395019.BMULJ_03797"/>
<dbReference type="KEGG" id="bmj:BMULJ_03797"/>
<dbReference type="KEGG" id="bmu:Bmul_4719"/>
<dbReference type="eggNOG" id="COG2801">
    <property type="taxonomic scope" value="Bacteria"/>
</dbReference>
<dbReference type="HOGENOM" id="CLU_027402_31_0_4"/>
<dbReference type="Proteomes" id="UP000008815">
    <property type="component" value="Chromosome 2"/>
</dbReference>
<dbReference type="GO" id="GO:0003676">
    <property type="term" value="F:nucleic acid binding"/>
    <property type="evidence" value="ECO:0007669"/>
    <property type="project" value="InterPro"/>
</dbReference>
<dbReference type="GO" id="GO:0015074">
    <property type="term" value="P:DNA integration"/>
    <property type="evidence" value="ECO:0007669"/>
    <property type="project" value="InterPro"/>
</dbReference>
<dbReference type="Gene3D" id="3.30.420.10">
    <property type="entry name" value="Ribonuclease H-like superfamily/Ribonuclease H"/>
    <property type="match status" value="1"/>
</dbReference>
<dbReference type="InterPro" id="IPR025948">
    <property type="entry name" value="HTH-like_dom"/>
</dbReference>
<dbReference type="InterPro" id="IPR001584">
    <property type="entry name" value="Integrase_cat-core"/>
</dbReference>
<dbReference type="InterPro" id="IPR012337">
    <property type="entry name" value="RNaseH-like_sf"/>
</dbReference>
<dbReference type="InterPro" id="IPR036397">
    <property type="entry name" value="RNaseH_sf"/>
</dbReference>
<dbReference type="InterPro" id="IPR048020">
    <property type="entry name" value="Transpos_IS3"/>
</dbReference>
<dbReference type="NCBIfam" id="NF033516">
    <property type="entry name" value="transpos_IS3"/>
    <property type="match status" value="1"/>
</dbReference>
<dbReference type="PANTHER" id="PTHR47515:SF1">
    <property type="entry name" value="BLR2054 PROTEIN"/>
    <property type="match status" value="1"/>
</dbReference>
<dbReference type="PANTHER" id="PTHR47515">
    <property type="entry name" value="LOW CALCIUM RESPONSE LOCUS PROTEIN T"/>
    <property type="match status" value="1"/>
</dbReference>
<dbReference type="Pfam" id="PF13276">
    <property type="entry name" value="HTH_21"/>
    <property type="match status" value="1"/>
</dbReference>
<dbReference type="Pfam" id="PF13683">
    <property type="entry name" value="rve_3"/>
    <property type="match status" value="1"/>
</dbReference>
<dbReference type="SUPFAM" id="SSF53098">
    <property type="entry name" value="Ribonuclease H-like"/>
    <property type="match status" value="1"/>
</dbReference>
<dbReference type="PROSITE" id="PS50994">
    <property type="entry name" value="INTEGRASE"/>
    <property type="match status" value="1"/>
</dbReference>
<protein>
    <recommendedName>
        <fullName>Insertion element IS407 uncharacterized 31.7 kDa protein</fullName>
    </recommendedName>
    <alternativeName>
        <fullName>ORF1</fullName>
    </alternativeName>
</protein>
<name>YI71_BURM1</name>
<proteinExistence type="predicted"/>
<keyword id="KW-1185">Reference proteome</keyword>
<keyword id="KW-0814">Transposable element</keyword>
<organism>
    <name type="scientific">Burkholderia multivorans (strain ATCC 17616 / 249)</name>
    <dbReference type="NCBI Taxonomy" id="395019"/>
    <lineage>
        <taxon>Bacteria</taxon>
        <taxon>Pseudomonadati</taxon>
        <taxon>Pseudomonadota</taxon>
        <taxon>Betaproteobacteria</taxon>
        <taxon>Burkholderiales</taxon>
        <taxon>Burkholderiaceae</taxon>
        <taxon>Burkholderia</taxon>
        <taxon>Burkholderia cepacia complex</taxon>
    </lineage>
</organism>
<gene>
    <name type="ordered locus">Bmul_4719</name>
    <name type="ordered locus">BMULJ_03797</name>
</gene>
<accession>P24577</accession>
<accession>A9AMT0</accession>
<accession>P24578</accession>
<accession>P24579</accession>
<reference key="1">
    <citation type="journal article" date="1991" name="Gene">
        <title>IS406 and IS407, two gene-activating insertion sequences for Pseudomonas cepacia.</title>
        <authorList>
            <person name="Wood M.S."/>
            <person name="Byrne A."/>
            <person name="Lessie T.G."/>
        </authorList>
    </citation>
    <scope>NUCLEOTIDE SEQUENCE [GENOMIC DNA]</scope>
</reference>
<reference key="2">
    <citation type="submission" date="2007-10" db="EMBL/GenBank/DDBJ databases">
        <title>Complete sequence of chromosome 2 of Burkholderia multivorans ATCC 17616.</title>
        <authorList>
            <person name="Copeland A."/>
            <person name="Lucas S."/>
            <person name="Lapidus A."/>
            <person name="Barry K."/>
            <person name="Glavina del Rio T."/>
            <person name="Dalin E."/>
            <person name="Tice H."/>
            <person name="Pitluck S."/>
            <person name="Chain P."/>
            <person name="Malfatti S."/>
            <person name="Shin M."/>
            <person name="Vergez L."/>
            <person name="Schmutz J."/>
            <person name="Larimer F."/>
            <person name="Land M."/>
            <person name="Hauser L."/>
            <person name="Kyrpides N."/>
            <person name="Kim E."/>
            <person name="Tiedje J."/>
            <person name="Richardson P."/>
        </authorList>
    </citation>
    <scope>NUCLEOTIDE SEQUENCE [LARGE SCALE GENOMIC DNA]</scope>
    <source>
        <strain>ATCC 17616 / 249</strain>
    </source>
</reference>
<reference key="3">
    <citation type="submission" date="2007-04" db="EMBL/GenBank/DDBJ databases">
        <title>Complete genome sequence of Burkholderia multivorans ATCC 17616.</title>
        <authorList>
            <person name="Ohtsubo Y."/>
            <person name="Yamashita A."/>
            <person name="Kurokawa K."/>
            <person name="Takami H."/>
            <person name="Yuhara S."/>
            <person name="Nishiyama E."/>
            <person name="Endo R."/>
            <person name="Miyazaki R."/>
            <person name="Ono A."/>
            <person name="Yano K."/>
            <person name="Ito M."/>
            <person name="Sota M."/>
            <person name="Yuji N."/>
            <person name="Hattori M."/>
            <person name="Tsuda M."/>
        </authorList>
    </citation>
    <scope>NUCLEOTIDE SEQUENCE [LARGE SCALE GENOMIC DNA]</scope>
    <source>
        <strain>ATCC 17616 / 249</strain>
    </source>
</reference>
<sequence>MSAIREKVNISERRACRLVGLSRSVLHYDAKPDHENEVLAARLVELAHERRRFGYRRLHALVEREGTHANHKRIYRLYREAGLAVRRRRKRQGVMIEREQLALPGAPNEVWSIDFVMDALSNGRRVKCLTVVDDFTKEAVDIVVDHGISGLYVARALDRAARFRGYPKAVRTDQGPEFTSRALDQWAYANGVTLKLIQAGKPTQNAYIESFNGKFRDECLNEHWFTTLAHARAVIAAWRQDYNEQRPHSALNYLAPSEFAAKHRATADAPAAFQELV</sequence>
<feature type="chain" id="PRO_0000075528" description="Insertion element IS407 uncharacterized 31.7 kDa protein">
    <location>
        <begin position="1"/>
        <end position="277"/>
    </location>
</feature>
<feature type="domain" description="Integrase catalytic" evidence="1">
    <location>
        <begin position="103"/>
        <end position="264"/>
    </location>
</feature>